<accession>Q67SC9</accession>
<name>RL21_SYMTH</name>
<proteinExistence type="inferred from homology"/>
<comment type="function">
    <text evidence="1">This protein binds to 23S rRNA in the presence of protein L20.</text>
</comment>
<comment type="subunit">
    <text evidence="1">Part of the 50S ribosomal subunit. Contacts protein L20.</text>
</comment>
<comment type="similarity">
    <text evidence="1">Belongs to the bacterial ribosomal protein bL21 family.</text>
</comment>
<reference key="1">
    <citation type="journal article" date="2004" name="Nucleic Acids Res.">
        <title>Genome sequence of Symbiobacterium thermophilum, an uncultivable bacterium that depends on microbial commensalism.</title>
        <authorList>
            <person name="Ueda K."/>
            <person name="Yamashita A."/>
            <person name="Ishikawa J."/>
            <person name="Shimada M."/>
            <person name="Watsuji T."/>
            <person name="Morimura K."/>
            <person name="Ikeda H."/>
            <person name="Hattori M."/>
            <person name="Beppu T."/>
        </authorList>
    </citation>
    <scope>NUCLEOTIDE SEQUENCE [LARGE SCALE GENOMIC DNA]</scope>
    <source>
        <strain>DSM 24528 / JCM 14929 / IAM 14863 / T</strain>
    </source>
</reference>
<protein>
    <recommendedName>
        <fullName evidence="1">Large ribosomal subunit protein bL21</fullName>
    </recommendedName>
    <alternativeName>
        <fullName evidence="2">50S ribosomal protein L21</fullName>
    </alternativeName>
</protein>
<feature type="chain" id="PRO_0000269404" description="Large ribosomal subunit protein bL21">
    <location>
        <begin position="1"/>
        <end position="104"/>
    </location>
</feature>
<gene>
    <name evidence="1" type="primary">rplU</name>
    <name type="ordered locus">STH429</name>
</gene>
<evidence type="ECO:0000255" key="1">
    <source>
        <dbReference type="HAMAP-Rule" id="MF_01363"/>
    </source>
</evidence>
<evidence type="ECO:0000305" key="2"/>
<keyword id="KW-1185">Reference proteome</keyword>
<keyword id="KW-0687">Ribonucleoprotein</keyword>
<keyword id="KW-0689">Ribosomal protein</keyword>
<keyword id="KW-0694">RNA-binding</keyword>
<keyword id="KW-0699">rRNA-binding</keyword>
<dbReference type="EMBL" id="AP006840">
    <property type="protein sequence ID" value="BAD39414.1"/>
    <property type="molecule type" value="Genomic_DNA"/>
</dbReference>
<dbReference type="RefSeq" id="WP_011194563.1">
    <property type="nucleotide sequence ID" value="NC_006177.1"/>
</dbReference>
<dbReference type="SMR" id="Q67SC9"/>
<dbReference type="STRING" id="292459.STH429"/>
<dbReference type="KEGG" id="sth:STH429"/>
<dbReference type="eggNOG" id="COG0261">
    <property type="taxonomic scope" value="Bacteria"/>
</dbReference>
<dbReference type="HOGENOM" id="CLU_061463_3_2_9"/>
<dbReference type="OrthoDB" id="9813334at2"/>
<dbReference type="Proteomes" id="UP000000417">
    <property type="component" value="Chromosome"/>
</dbReference>
<dbReference type="GO" id="GO:0005737">
    <property type="term" value="C:cytoplasm"/>
    <property type="evidence" value="ECO:0007669"/>
    <property type="project" value="UniProtKB-ARBA"/>
</dbReference>
<dbReference type="GO" id="GO:1990904">
    <property type="term" value="C:ribonucleoprotein complex"/>
    <property type="evidence" value="ECO:0007669"/>
    <property type="project" value="UniProtKB-KW"/>
</dbReference>
<dbReference type="GO" id="GO:0005840">
    <property type="term" value="C:ribosome"/>
    <property type="evidence" value="ECO:0007669"/>
    <property type="project" value="UniProtKB-KW"/>
</dbReference>
<dbReference type="GO" id="GO:0019843">
    <property type="term" value="F:rRNA binding"/>
    <property type="evidence" value="ECO:0007669"/>
    <property type="project" value="UniProtKB-UniRule"/>
</dbReference>
<dbReference type="GO" id="GO:0003735">
    <property type="term" value="F:structural constituent of ribosome"/>
    <property type="evidence" value="ECO:0007669"/>
    <property type="project" value="InterPro"/>
</dbReference>
<dbReference type="GO" id="GO:0006412">
    <property type="term" value="P:translation"/>
    <property type="evidence" value="ECO:0007669"/>
    <property type="project" value="UniProtKB-UniRule"/>
</dbReference>
<dbReference type="HAMAP" id="MF_01363">
    <property type="entry name" value="Ribosomal_bL21"/>
    <property type="match status" value="1"/>
</dbReference>
<dbReference type="InterPro" id="IPR028909">
    <property type="entry name" value="bL21-like"/>
</dbReference>
<dbReference type="InterPro" id="IPR036164">
    <property type="entry name" value="bL21-like_sf"/>
</dbReference>
<dbReference type="InterPro" id="IPR001787">
    <property type="entry name" value="Ribosomal_bL21"/>
</dbReference>
<dbReference type="InterPro" id="IPR018258">
    <property type="entry name" value="Ribosomal_bL21_CS"/>
</dbReference>
<dbReference type="NCBIfam" id="TIGR00061">
    <property type="entry name" value="L21"/>
    <property type="match status" value="1"/>
</dbReference>
<dbReference type="PANTHER" id="PTHR21349">
    <property type="entry name" value="50S RIBOSOMAL PROTEIN L21"/>
    <property type="match status" value="1"/>
</dbReference>
<dbReference type="PANTHER" id="PTHR21349:SF0">
    <property type="entry name" value="LARGE RIBOSOMAL SUBUNIT PROTEIN BL21M"/>
    <property type="match status" value="1"/>
</dbReference>
<dbReference type="Pfam" id="PF00829">
    <property type="entry name" value="Ribosomal_L21p"/>
    <property type="match status" value="1"/>
</dbReference>
<dbReference type="SUPFAM" id="SSF141091">
    <property type="entry name" value="L21p-like"/>
    <property type="match status" value="1"/>
</dbReference>
<dbReference type="PROSITE" id="PS01169">
    <property type="entry name" value="RIBOSOMAL_L21"/>
    <property type="match status" value="1"/>
</dbReference>
<organism>
    <name type="scientific">Symbiobacterium thermophilum (strain DSM 24528 / JCM 14929 / IAM 14863 / T)</name>
    <dbReference type="NCBI Taxonomy" id="292459"/>
    <lineage>
        <taxon>Bacteria</taxon>
        <taxon>Bacillati</taxon>
        <taxon>Bacillota</taxon>
        <taxon>Clostridia</taxon>
        <taxon>Eubacteriales</taxon>
        <taxon>Symbiobacteriaceae</taxon>
        <taxon>Symbiobacterium</taxon>
    </lineage>
</organism>
<sequence length="104" mass="11442">MTYAIVETGGKQYRVQEGDTLRVEKLTAGEGETVVFDKVLAISRDGKVTVGTPYIEGAKVTAKVAAHGKGPKIIVFKYRNKTNYRRKTGHRQPFTAITIESIEG</sequence>